<protein>
    <recommendedName>
        <fullName evidence="1">N-acetyl-gamma-glutamyl-phosphate reductase</fullName>
        <shortName evidence="1">AGPR</shortName>
        <ecNumber evidence="1">1.2.1.38</ecNumber>
    </recommendedName>
    <alternativeName>
        <fullName evidence="1">N-acetyl-glutamate semialdehyde dehydrogenase</fullName>
        <shortName evidence="1">NAGSA dehydrogenase</shortName>
    </alternativeName>
</protein>
<reference key="1">
    <citation type="journal article" date="2009" name="J. Bacteriol.">
        <title>The genome of Burkholderia cenocepacia J2315, an epidemic pathogen of cystic fibrosis patients.</title>
        <authorList>
            <person name="Holden M.T."/>
            <person name="Seth-Smith H.M."/>
            <person name="Crossman L.C."/>
            <person name="Sebaihia M."/>
            <person name="Bentley S.D."/>
            <person name="Cerdeno-Tarraga A.M."/>
            <person name="Thomson N.R."/>
            <person name="Bason N."/>
            <person name="Quail M.A."/>
            <person name="Sharp S."/>
            <person name="Cherevach I."/>
            <person name="Churcher C."/>
            <person name="Goodhead I."/>
            <person name="Hauser H."/>
            <person name="Holroyd N."/>
            <person name="Mungall K."/>
            <person name="Scott P."/>
            <person name="Walker D."/>
            <person name="White B."/>
            <person name="Rose H."/>
            <person name="Iversen P."/>
            <person name="Mil-Homens D."/>
            <person name="Rocha E.P."/>
            <person name="Fialho A.M."/>
            <person name="Baldwin A."/>
            <person name="Dowson C."/>
            <person name="Barrell B.G."/>
            <person name="Govan J.R."/>
            <person name="Vandamme P."/>
            <person name="Hart C.A."/>
            <person name="Mahenthiralingam E."/>
            <person name="Parkhill J."/>
        </authorList>
    </citation>
    <scope>NUCLEOTIDE SEQUENCE [LARGE SCALE GENOMIC DNA]</scope>
    <source>
        <strain>ATCC BAA-245 / DSM 16553 / LMG 16656 / NCTC 13227 / J2315 / CF5610</strain>
    </source>
</reference>
<feature type="chain" id="PRO_1000137113" description="N-acetyl-gamma-glutamyl-phosphate reductase">
    <location>
        <begin position="1"/>
        <end position="313"/>
    </location>
</feature>
<feature type="active site" evidence="1">
    <location>
        <position position="117"/>
    </location>
</feature>
<proteinExistence type="inferred from homology"/>
<evidence type="ECO:0000255" key="1">
    <source>
        <dbReference type="HAMAP-Rule" id="MF_01110"/>
    </source>
</evidence>
<accession>B4EG04</accession>
<comment type="function">
    <text evidence="1">Catalyzes the NADPH-dependent reduction of N-acetyl-5-glutamyl phosphate to yield N-acetyl-L-glutamate 5-semialdehyde.</text>
</comment>
<comment type="catalytic activity">
    <reaction evidence="1">
        <text>N-acetyl-L-glutamate 5-semialdehyde + phosphate + NADP(+) = N-acetyl-L-glutamyl 5-phosphate + NADPH + H(+)</text>
        <dbReference type="Rhea" id="RHEA:21588"/>
        <dbReference type="ChEBI" id="CHEBI:15378"/>
        <dbReference type="ChEBI" id="CHEBI:29123"/>
        <dbReference type="ChEBI" id="CHEBI:43474"/>
        <dbReference type="ChEBI" id="CHEBI:57783"/>
        <dbReference type="ChEBI" id="CHEBI:57936"/>
        <dbReference type="ChEBI" id="CHEBI:58349"/>
        <dbReference type="EC" id="1.2.1.38"/>
    </reaction>
</comment>
<comment type="pathway">
    <text evidence="1">Amino-acid biosynthesis; L-arginine biosynthesis; N(2)-acetyl-L-ornithine from L-glutamate: step 3/4.</text>
</comment>
<comment type="subcellular location">
    <subcellularLocation>
        <location evidence="1">Cytoplasm</location>
    </subcellularLocation>
</comment>
<comment type="similarity">
    <text evidence="1">Belongs to the NAGSA dehydrogenase family. Type 2 subfamily.</text>
</comment>
<dbReference type="EC" id="1.2.1.38" evidence="1"/>
<dbReference type="EMBL" id="AM747721">
    <property type="protein sequence ID" value="CAR53873.1"/>
    <property type="molecule type" value="Genomic_DNA"/>
</dbReference>
<dbReference type="RefSeq" id="WP_006485160.1">
    <property type="nucleotide sequence ID" value="NC_011001.1"/>
</dbReference>
<dbReference type="SMR" id="B4EG04"/>
<dbReference type="KEGG" id="bcj:BCAM0018"/>
<dbReference type="eggNOG" id="COG0002">
    <property type="taxonomic scope" value="Bacteria"/>
</dbReference>
<dbReference type="HOGENOM" id="CLU_077118_0_0_4"/>
<dbReference type="BioCyc" id="BCEN216591:G1G1V-3952-MONOMER"/>
<dbReference type="UniPathway" id="UPA00068">
    <property type="reaction ID" value="UER00108"/>
</dbReference>
<dbReference type="Proteomes" id="UP000001035">
    <property type="component" value="Chromosome 2"/>
</dbReference>
<dbReference type="GO" id="GO:0005737">
    <property type="term" value="C:cytoplasm"/>
    <property type="evidence" value="ECO:0007669"/>
    <property type="project" value="UniProtKB-SubCell"/>
</dbReference>
<dbReference type="GO" id="GO:0003942">
    <property type="term" value="F:N-acetyl-gamma-glutamyl-phosphate reductase activity"/>
    <property type="evidence" value="ECO:0007669"/>
    <property type="project" value="UniProtKB-UniRule"/>
</dbReference>
<dbReference type="GO" id="GO:0051287">
    <property type="term" value="F:NAD binding"/>
    <property type="evidence" value="ECO:0007669"/>
    <property type="project" value="InterPro"/>
</dbReference>
<dbReference type="GO" id="GO:0006526">
    <property type="term" value="P:L-arginine biosynthetic process"/>
    <property type="evidence" value="ECO:0007669"/>
    <property type="project" value="UniProtKB-UniRule"/>
</dbReference>
<dbReference type="CDD" id="cd23935">
    <property type="entry name" value="AGPR_2_C"/>
    <property type="match status" value="1"/>
</dbReference>
<dbReference type="CDD" id="cd17896">
    <property type="entry name" value="AGPR_2_N"/>
    <property type="match status" value="1"/>
</dbReference>
<dbReference type="Gene3D" id="3.30.360.10">
    <property type="entry name" value="Dihydrodipicolinate Reductase, domain 2"/>
    <property type="match status" value="1"/>
</dbReference>
<dbReference type="Gene3D" id="3.40.50.720">
    <property type="entry name" value="NAD(P)-binding Rossmann-like Domain"/>
    <property type="match status" value="1"/>
</dbReference>
<dbReference type="HAMAP" id="MF_01110">
    <property type="entry name" value="ArgC_type2"/>
    <property type="match status" value="1"/>
</dbReference>
<dbReference type="InterPro" id="IPR010136">
    <property type="entry name" value="AGPR_type-2"/>
</dbReference>
<dbReference type="InterPro" id="IPR036291">
    <property type="entry name" value="NAD(P)-bd_dom_sf"/>
</dbReference>
<dbReference type="InterPro" id="IPR050085">
    <property type="entry name" value="NAGSA_dehydrogenase"/>
</dbReference>
<dbReference type="InterPro" id="IPR000534">
    <property type="entry name" value="Semialdehyde_DH_NAD-bd"/>
</dbReference>
<dbReference type="NCBIfam" id="TIGR01851">
    <property type="entry name" value="argC_other"/>
    <property type="match status" value="1"/>
</dbReference>
<dbReference type="PANTHER" id="PTHR32338:SF10">
    <property type="entry name" value="N-ACETYL-GAMMA-GLUTAMYL-PHOSPHATE REDUCTASE, CHLOROPLASTIC-RELATED"/>
    <property type="match status" value="1"/>
</dbReference>
<dbReference type="PANTHER" id="PTHR32338">
    <property type="entry name" value="N-ACETYL-GAMMA-GLUTAMYL-PHOSPHATE REDUCTASE, CHLOROPLASTIC-RELATED-RELATED"/>
    <property type="match status" value="1"/>
</dbReference>
<dbReference type="Pfam" id="PF01118">
    <property type="entry name" value="Semialdhyde_dh"/>
    <property type="match status" value="1"/>
</dbReference>
<dbReference type="Pfam" id="PF22698">
    <property type="entry name" value="Semialdhyde_dhC_1"/>
    <property type="match status" value="1"/>
</dbReference>
<dbReference type="SMART" id="SM00859">
    <property type="entry name" value="Semialdhyde_dh"/>
    <property type="match status" value="1"/>
</dbReference>
<dbReference type="SUPFAM" id="SSF55347">
    <property type="entry name" value="Glyceraldehyde-3-phosphate dehydrogenase-like, C-terminal domain"/>
    <property type="match status" value="1"/>
</dbReference>
<dbReference type="SUPFAM" id="SSF51735">
    <property type="entry name" value="NAD(P)-binding Rossmann-fold domains"/>
    <property type="match status" value="1"/>
</dbReference>
<gene>
    <name evidence="1" type="primary">argC</name>
    <name type="ordered locus">BceJ2315_34880</name>
    <name type="ORF">BCAM0018</name>
</gene>
<sequence>MSFPTVFIDGDQGTTGLQIHARLRDRTDVRLLTLPAAERKDPARRADALNACDIAVLCLPDAAAREAVGFIRNPAVRVIDASSAHRTQPDWVYGFPEMADGHAQDIAHAKRVTNPGCYPTGAIGLLRPLLQAGLLPRDYPVSIHAVSGYSGGGRAAVDAFESADAATPPLPLQVYGLALEHKHVPEIRQHAGLAHRPFFVPAYGAYRQGIVLTIPIELRLLPAGVTGERLHACLAHHYADARHVDVTPLADAAAATHLDPQALNGTNDLRLGVFVNEARGQVLLSAVFDNLGKGASGAAVQNLDLMLGASSAA</sequence>
<organism>
    <name type="scientific">Burkholderia cenocepacia (strain ATCC BAA-245 / DSM 16553 / LMG 16656 / NCTC 13227 / J2315 / CF5610)</name>
    <name type="common">Burkholderia cepacia (strain J2315)</name>
    <dbReference type="NCBI Taxonomy" id="216591"/>
    <lineage>
        <taxon>Bacteria</taxon>
        <taxon>Pseudomonadati</taxon>
        <taxon>Pseudomonadota</taxon>
        <taxon>Betaproteobacteria</taxon>
        <taxon>Burkholderiales</taxon>
        <taxon>Burkholderiaceae</taxon>
        <taxon>Burkholderia</taxon>
        <taxon>Burkholderia cepacia complex</taxon>
    </lineage>
</organism>
<keyword id="KW-0028">Amino-acid biosynthesis</keyword>
<keyword id="KW-0055">Arginine biosynthesis</keyword>
<keyword id="KW-0963">Cytoplasm</keyword>
<keyword id="KW-0521">NADP</keyword>
<keyword id="KW-0560">Oxidoreductase</keyword>
<name>ARGC_BURCJ</name>